<feature type="signal peptide" evidence="1">
    <location>
        <begin position="1"/>
        <end position="21"/>
    </location>
</feature>
<feature type="chain" id="PRO_0000018152" description="Uncharacterized lipoprotein LprP">
    <location>
        <begin position="22"/>
        <end position="224"/>
    </location>
</feature>
<feature type="lipid moiety-binding region" description="N-palmitoyl cysteine" evidence="2">
    <location>
        <position position="22"/>
    </location>
</feature>
<feature type="lipid moiety-binding region" description="S-diacylglycerol cysteine" evidence="2">
    <location>
        <position position="22"/>
    </location>
</feature>
<sequence length="224" mass="24398">MKRTSRSLTAALLGIAALLAGCIKPNTFDPYANPGRGELDRRQKIVNGRPDLETVQQQLANLDATIRAMIAKYSPQTRFSTGVTVSHLTNGCNDPFTRTIGRQEASELFFGRPAPTPQQWLQIVTELAPVFKAAGFRPNNSVPGDPPQPLGAPNYSQIRDDGVTINLVNGDNRGPLGYSYNTGCHPPAAWRTAPPPLNMRPANDPDVHYPYLYGSPGGRTRDAY</sequence>
<protein>
    <recommendedName>
        <fullName>Uncharacterized lipoprotein LprP</fullName>
    </recommendedName>
</protein>
<gene>
    <name type="primary">lprP</name>
    <name type="ordered locus">Rv0962c</name>
    <name type="ORF">MTCY10D7.12</name>
</gene>
<proteinExistence type="inferred from homology"/>
<keyword id="KW-1003">Cell membrane</keyword>
<keyword id="KW-0449">Lipoprotein</keyword>
<keyword id="KW-0472">Membrane</keyword>
<keyword id="KW-0564">Palmitate</keyword>
<keyword id="KW-1185">Reference proteome</keyword>
<keyword id="KW-0732">Signal</keyword>
<dbReference type="EMBL" id="AL123456">
    <property type="protein sequence ID" value="CCP43711.1"/>
    <property type="molecule type" value="Genomic_DNA"/>
</dbReference>
<dbReference type="PIR" id="H70717">
    <property type="entry name" value="H70717"/>
</dbReference>
<dbReference type="RefSeq" id="NP_215477.1">
    <property type="nucleotide sequence ID" value="NC_000962.3"/>
</dbReference>
<dbReference type="RefSeq" id="WP_003916736.1">
    <property type="nucleotide sequence ID" value="NZ_NVQJ01000001.1"/>
</dbReference>
<dbReference type="STRING" id="83332.Rv0962c"/>
<dbReference type="PaxDb" id="83332-Rv0962c"/>
<dbReference type="DNASU" id="885177"/>
<dbReference type="GeneID" id="885177"/>
<dbReference type="KEGG" id="mtu:Rv0962c"/>
<dbReference type="KEGG" id="mtv:RVBD_0962c"/>
<dbReference type="TubercuList" id="Rv0962c"/>
<dbReference type="eggNOG" id="ENOG503294V">
    <property type="taxonomic scope" value="Bacteria"/>
</dbReference>
<dbReference type="InParanoid" id="P9WK39"/>
<dbReference type="OrthoDB" id="4717553at2"/>
<dbReference type="Proteomes" id="UP000001584">
    <property type="component" value="Chromosome"/>
</dbReference>
<dbReference type="GO" id="GO:0005886">
    <property type="term" value="C:plasma membrane"/>
    <property type="evidence" value="ECO:0007669"/>
    <property type="project" value="UniProtKB-SubCell"/>
</dbReference>
<dbReference type="Gene3D" id="3.30.2030.20">
    <property type="match status" value="1"/>
</dbReference>
<dbReference type="InterPro" id="IPR032018">
    <property type="entry name" value="LppA/LppB/LprP"/>
</dbReference>
<dbReference type="Pfam" id="PF16708">
    <property type="entry name" value="LppA"/>
    <property type="match status" value="1"/>
</dbReference>
<dbReference type="PROSITE" id="PS51257">
    <property type="entry name" value="PROKAR_LIPOPROTEIN"/>
    <property type="match status" value="1"/>
</dbReference>
<reference key="1">
    <citation type="journal article" date="1998" name="Nature">
        <title>Deciphering the biology of Mycobacterium tuberculosis from the complete genome sequence.</title>
        <authorList>
            <person name="Cole S.T."/>
            <person name="Brosch R."/>
            <person name="Parkhill J."/>
            <person name="Garnier T."/>
            <person name="Churcher C.M."/>
            <person name="Harris D.E."/>
            <person name="Gordon S.V."/>
            <person name="Eiglmeier K."/>
            <person name="Gas S."/>
            <person name="Barry C.E. III"/>
            <person name="Tekaia F."/>
            <person name="Badcock K."/>
            <person name="Basham D."/>
            <person name="Brown D."/>
            <person name="Chillingworth T."/>
            <person name="Connor R."/>
            <person name="Davies R.M."/>
            <person name="Devlin K."/>
            <person name="Feltwell T."/>
            <person name="Gentles S."/>
            <person name="Hamlin N."/>
            <person name="Holroyd S."/>
            <person name="Hornsby T."/>
            <person name="Jagels K."/>
            <person name="Krogh A."/>
            <person name="McLean J."/>
            <person name="Moule S."/>
            <person name="Murphy L.D."/>
            <person name="Oliver S."/>
            <person name="Osborne J."/>
            <person name="Quail M.A."/>
            <person name="Rajandream M.A."/>
            <person name="Rogers J."/>
            <person name="Rutter S."/>
            <person name="Seeger K."/>
            <person name="Skelton S."/>
            <person name="Squares S."/>
            <person name="Squares R."/>
            <person name="Sulston J.E."/>
            <person name="Taylor K."/>
            <person name="Whitehead S."/>
            <person name="Barrell B.G."/>
        </authorList>
    </citation>
    <scope>NUCLEOTIDE SEQUENCE [LARGE SCALE GENOMIC DNA]</scope>
    <source>
        <strain>ATCC 25618 / H37Rv</strain>
    </source>
</reference>
<organism>
    <name type="scientific">Mycobacterium tuberculosis (strain ATCC 25618 / H37Rv)</name>
    <dbReference type="NCBI Taxonomy" id="83332"/>
    <lineage>
        <taxon>Bacteria</taxon>
        <taxon>Bacillati</taxon>
        <taxon>Actinomycetota</taxon>
        <taxon>Actinomycetes</taxon>
        <taxon>Mycobacteriales</taxon>
        <taxon>Mycobacteriaceae</taxon>
        <taxon>Mycobacterium</taxon>
        <taxon>Mycobacterium tuberculosis complex</taxon>
    </lineage>
</organism>
<comment type="subcellular location">
    <subcellularLocation>
        <location evidence="2">Cell membrane</location>
        <topology evidence="2">Lipid-anchor</topology>
    </subcellularLocation>
</comment>
<comment type="similarity">
    <text evidence="2">To M.bovis LprP.</text>
</comment>
<evidence type="ECO:0000255" key="1">
    <source>
        <dbReference type="PROSITE-ProRule" id="PRU00303"/>
    </source>
</evidence>
<evidence type="ECO:0000305" key="2"/>
<name>LPRP_MYCTU</name>
<accession>P9WK39</accession>
<accession>L0T5F3</accession>
<accession>P71548</accession>